<evidence type="ECO:0000250" key="1"/>
<evidence type="ECO:0000255" key="2">
    <source>
        <dbReference type="PROSITE-ProRule" id="PRU00344"/>
    </source>
</evidence>
<evidence type="ECO:0000269" key="3">
    <source>
    </source>
</evidence>
<evidence type="ECO:0000269" key="4">
    <source>
    </source>
</evidence>
<evidence type="ECO:0000269" key="5">
    <source>
    </source>
</evidence>
<evidence type="ECO:0000269" key="6">
    <source>
    </source>
</evidence>
<evidence type="ECO:0000305" key="7"/>
<evidence type="ECO:0007829" key="8">
    <source>
        <dbReference type="PDB" id="3G9Q"/>
    </source>
</evidence>
<evidence type="ECO:0007829" key="9">
    <source>
        <dbReference type="PDB" id="3HXP"/>
    </source>
</evidence>
<accession>P37580</accession>
<reference key="1">
    <citation type="journal article" date="1993" name="Mol. Microbiol.">
        <title>Iron-hydroxamate uptake systems in Bacillus subtilis: identification of a lipoprotein as part of a binding protein-dependent transport system.</title>
        <authorList>
            <person name="Schneider R."/>
            <person name="Hantke K."/>
        </authorList>
    </citation>
    <scope>NUCLEOTIDE SEQUENCE [GENOMIC DNA]</scope>
    <scope>FUNCTION IN IRON(3+)-HYDROXAMATE TRANSPORT</scope>
    <source>
        <strain>168 / Marburg / ATCC 6051 / DSM 10 / JCM 1465 / NBRC 13719 / NCIMB 3610 / NRRL NRS-744 / VKM B-501</strain>
    </source>
</reference>
<reference key="2">
    <citation type="submission" date="1995-11" db="EMBL/GenBank/DDBJ databases">
        <authorList>
            <person name="Schneider R."/>
            <person name="Hantke K."/>
        </authorList>
    </citation>
    <scope>NUCLEOTIDE SEQUENCE [GENOMIC DNA]</scope>
    <source>
        <strain>168</strain>
    </source>
</reference>
<reference key="3">
    <citation type="journal article" date="1998" name="Microbiology">
        <title>The yvsA-yvqA (293 degrees - 289 degrees) region of the Bacillus subtilis chromosome containing genes involved in metal ion uptake and a putative sigma factor.</title>
        <authorList>
            <person name="Wipat A."/>
            <person name="Brignell C.S."/>
            <person name="Guy J.B."/>
            <person name="Rose M."/>
            <person name="Emmerson P.T."/>
            <person name="Harwood C.R."/>
        </authorList>
    </citation>
    <scope>NUCLEOTIDE SEQUENCE [GENOMIC DNA]</scope>
    <source>
        <strain>168</strain>
    </source>
</reference>
<reference key="4">
    <citation type="journal article" date="1997" name="Nature">
        <title>The complete genome sequence of the Gram-positive bacterium Bacillus subtilis.</title>
        <authorList>
            <person name="Kunst F."/>
            <person name="Ogasawara N."/>
            <person name="Moszer I."/>
            <person name="Albertini A.M."/>
            <person name="Alloni G."/>
            <person name="Azevedo V."/>
            <person name="Bertero M.G."/>
            <person name="Bessieres P."/>
            <person name="Bolotin A."/>
            <person name="Borchert S."/>
            <person name="Borriss R."/>
            <person name="Boursier L."/>
            <person name="Brans A."/>
            <person name="Braun M."/>
            <person name="Brignell S.C."/>
            <person name="Bron S."/>
            <person name="Brouillet S."/>
            <person name="Bruschi C.V."/>
            <person name="Caldwell B."/>
            <person name="Capuano V."/>
            <person name="Carter N.M."/>
            <person name="Choi S.-K."/>
            <person name="Codani J.-J."/>
            <person name="Connerton I.F."/>
            <person name="Cummings N.J."/>
            <person name="Daniel R.A."/>
            <person name="Denizot F."/>
            <person name="Devine K.M."/>
            <person name="Duesterhoeft A."/>
            <person name="Ehrlich S.D."/>
            <person name="Emmerson P.T."/>
            <person name="Entian K.-D."/>
            <person name="Errington J."/>
            <person name="Fabret C."/>
            <person name="Ferrari E."/>
            <person name="Foulger D."/>
            <person name="Fritz C."/>
            <person name="Fujita M."/>
            <person name="Fujita Y."/>
            <person name="Fuma S."/>
            <person name="Galizzi A."/>
            <person name="Galleron N."/>
            <person name="Ghim S.-Y."/>
            <person name="Glaser P."/>
            <person name="Goffeau A."/>
            <person name="Golightly E.J."/>
            <person name="Grandi G."/>
            <person name="Guiseppi G."/>
            <person name="Guy B.J."/>
            <person name="Haga K."/>
            <person name="Haiech J."/>
            <person name="Harwood C.R."/>
            <person name="Henaut A."/>
            <person name="Hilbert H."/>
            <person name="Holsappel S."/>
            <person name="Hosono S."/>
            <person name="Hullo M.-F."/>
            <person name="Itaya M."/>
            <person name="Jones L.-M."/>
            <person name="Joris B."/>
            <person name="Karamata D."/>
            <person name="Kasahara Y."/>
            <person name="Klaerr-Blanchard M."/>
            <person name="Klein C."/>
            <person name="Kobayashi Y."/>
            <person name="Koetter P."/>
            <person name="Koningstein G."/>
            <person name="Krogh S."/>
            <person name="Kumano M."/>
            <person name="Kurita K."/>
            <person name="Lapidus A."/>
            <person name="Lardinois S."/>
            <person name="Lauber J."/>
            <person name="Lazarevic V."/>
            <person name="Lee S.-M."/>
            <person name="Levine A."/>
            <person name="Liu H."/>
            <person name="Masuda S."/>
            <person name="Mauel C."/>
            <person name="Medigue C."/>
            <person name="Medina N."/>
            <person name="Mellado R.P."/>
            <person name="Mizuno M."/>
            <person name="Moestl D."/>
            <person name="Nakai S."/>
            <person name="Noback M."/>
            <person name="Noone D."/>
            <person name="O'Reilly M."/>
            <person name="Ogawa K."/>
            <person name="Ogiwara A."/>
            <person name="Oudega B."/>
            <person name="Park S.-H."/>
            <person name="Parro V."/>
            <person name="Pohl T.M."/>
            <person name="Portetelle D."/>
            <person name="Porwollik S."/>
            <person name="Prescott A.M."/>
            <person name="Presecan E."/>
            <person name="Pujic P."/>
            <person name="Purnelle B."/>
            <person name="Rapoport G."/>
            <person name="Rey M."/>
            <person name="Reynolds S."/>
            <person name="Rieger M."/>
            <person name="Rivolta C."/>
            <person name="Rocha E."/>
            <person name="Roche B."/>
            <person name="Rose M."/>
            <person name="Sadaie Y."/>
            <person name="Sato T."/>
            <person name="Scanlan E."/>
            <person name="Schleich S."/>
            <person name="Schroeter R."/>
            <person name="Scoffone F."/>
            <person name="Sekiguchi J."/>
            <person name="Sekowska A."/>
            <person name="Seror S.J."/>
            <person name="Serror P."/>
            <person name="Shin B.-S."/>
            <person name="Soldo B."/>
            <person name="Sorokin A."/>
            <person name="Tacconi E."/>
            <person name="Takagi T."/>
            <person name="Takahashi H."/>
            <person name="Takemaru K."/>
            <person name="Takeuchi M."/>
            <person name="Tamakoshi A."/>
            <person name="Tanaka T."/>
            <person name="Terpstra P."/>
            <person name="Tognoni A."/>
            <person name="Tosato V."/>
            <person name="Uchiyama S."/>
            <person name="Vandenbol M."/>
            <person name="Vannier F."/>
            <person name="Vassarotti A."/>
            <person name="Viari A."/>
            <person name="Wambutt R."/>
            <person name="Wedler E."/>
            <person name="Wedler H."/>
            <person name="Weitzenegger T."/>
            <person name="Winters P."/>
            <person name="Wipat A."/>
            <person name="Yamamoto H."/>
            <person name="Yamane K."/>
            <person name="Yasumoto K."/>
            <person name="Yata K."/>
            <person name="Yoshida K."/>
            <person name="Yoshikawa H.-F."/>
            <person name="Zumstein E."/>
            <person name="Yoshikawa H."/>
            <person name="Danchin A."/>
        </authorList>
    </citation>
    <scope>NUCLEOTIDE SEQUENCE [LARGE SCALE GENOMIC DNA]</scope>
    <source>
        <strain>168</strain>
    </source>
</reference>
<reference key="5">
    <citation type="journal article" date="2006" name="J. Bacteriol.">
        <title>Role of the Fur regulon in iron transport in Bacillus subtilis.</title>
        <authorList>
            <person name="Ollinger J."/>
            <person name="Song K.-B."/>
            <person name="Antelmann H."/>
            <person name="Hecker M."/>
            <person name="Helmann J.D."/>
        </authorList>
    </citation>
    <scope>FUNCTION IN IRON(3+)-HYDROXAMATE TRANSPORT</scope>
    <source>
        <strain>168 / CU1065</strain>
    </source>
</reference>
<reference key="6">
    <citation type="journal article" date="2010" name="Genes Dev.">
        <title>Functional microdomains in bacterial membranes.</title>
        <authorList>
            <person name="Lopez D."/>
            <person name="Kolter R."/>
        </authorList>
    </citation>
    <scope>SUBCELLULAR LOCATION</scope>
    <source>
        <strain>168 / Marburg / ATCC 6051 / DSM 10 / JCM 1465 / NBRC 13719 / NCIMB 3610 / NRRL NRS-744 / VKM B-501</strain>
    </source>
</reference>
<reference key="7">
    <citation type="journal article" date="2013" name="Mol. Microbiol.">
        <title>Flotillins functionally organize the bacterial membrane.</title>
        <authorList>
            <person name="Bach J.N."/>
            <person name="Bramkamp M."/>
        </authorList>
    </citation>
    <scope>INTERACTION WITH FLOT</scope>
    <scope>SUBCELLULAR LOCATION</scope>
    <source>
        <strain>168</strain>
    </source>
</reference>
<sequence length="315" mass="34426">MTHIYKKLGAAFFALLLIAALAACGNNSESKGSASDSKGAETFTYKAENGNVKIPKHPKRVVVMADGYYGYFKTLGINVVGAPENVFKNPYYKGKTNGVENIGDGTSVEKVIDLNPDLIIVWTTQGADIKKLEKIAPTVAVKYDKLDNIEQLKEFAKMTGTEDKAEKWLAKWDKKVAAAKTKIKKAVGDKTISIMQTNGKDIYVFGKDFGRGGSIIYKDLGLQATKLTKEKAIDQGPGYTSISLEKLPDFAGDYIFAGPWQSGGDDGGVFESSIWKNLNAVKNGHVYKMDPIGFYFTDPISLEGQLEFITESLTK</sequence>
<comment type="function">
    <text evidence="3 6">Part of the ABC transporter complex FhuCBGD involved in iron(3+)-hydroxamate import. Binds the iron(3+)-hydroxamate complex and transfers it to the membrane-bound permease. Required for the transport of ferrichrome and coprogen.</text>
</comment>
<comment type="subunit">
    <text evidence="1">The complex is composed of an ATP-binding protein (FhuC), two transmembrane proteins (FhuB and FhuG) and a solute-binding protein (FhuD or YxeB).</text>
</comment>
<comment type="subcellular location">
    <subcellularLocation>
        <location evidence="4">Cell membrane</location>
        <topology evidence="7">Lipid-anchor</topology>
    </subcellularLocation>
    <subcellularLocation>
        <location evidence="4 5">Membrane raft</location>
        <topology evidence="7">Lipid-anchor</topology>
    </subcellularLocation>
    <text evidence="4 5">Present in detergent-resistant membrane (DRM) fractions that may be equivalent to eukaryotic membrane rafts; these rafts include proteins involved in signaling, molecule trafficking and protein secretion.</text>
</comment>
<comment type="similarity">
    <text evidence="7">Belongs to the bacterial solute-binding protein 8 family.</text>
</comment>
<organism>
    <name type="scientific">Bacillus subtilis (strain 168)</name>
    <dbReference type="NCBI Taxonomy" id="224308"/>
    <lineage>
        <taxon>Bacteria</taxon>
        <taxon>Bacillati</taxon>
        <taxon>Bacillota</taxon>
        <taxon>Bacilli</taxon>
        <taxon>Bacillales</taxon>
        <taxon>Bacillaceae</taxon>
        <taxon>Bacillus</taxon>
    </lineage>
</organism>
<name>FHUD_BACSU</name>
<keyword id="KW-0002">3D-structure</keyword>
<keyword id="KW-1003">Cell membrane</keyword>
<keyword id="KW-0406">Ion transport</keyword>
<keyword id="KW-0408">Iron</keyword>
<keyword id="KW-0410">Iron transport</keyword>
<keyword id="KW-0449">Lipoprotein</keyword>
<keyword id="KW-0472">Membrane</keyword>
<keyword id="KW-0564">Palmitate</keyword>
<keyword id="KW-1185">Reference proteome</keyword>
<keyword id="KW-0732">Signal</keyword>
<keyword id="KW-0813">Transport</keyword>
<dbReference type="EMBL" id="M87283">
    <property type="protein sequence ID" value="AAA22424.1"/>
    <property type="molecule type" value="Genomic_DNA"/>
</dbReference>
<dbReference type="EMBL" id="X93092">
    <property type="protein sequence ID" value="CAA63642.1"/>
    <property type="molecule type" value="Genomic_DNA"/>
</dbReference>
<dbReference type="EMBL" id="AJ223978">
    <property type="protein sequence ID" value="CAA11719.1"/>
    <property type="molecule type" value="Genomic_DNA"/>
</dbReference>
<dbReference type="EMBL" id="AL009126">
    <property type="protein sequence ID" value="CAB15338.1"/>
    <property type="molecule type" value="Genomic_DNA"/>
</dbReference>
<dbReference type="PIR" id="S32930">
    <property type="entry name" value="S32930"/>
</dbReference>
<dbReference type="RefSeq" id="NP_391213.1">
    <property type="nucleotide sequence ID" value="NC_000964.3"/>
</dbReference>
<dbReference type="RefSeq" id="WP_003243220.1">
    <property type="nucleotide sequence ID" value="NZ_OZ025638.1"/>
</dbReference>
<dbReference type="PDB" id="3G9Q">
    <property type="method" value="X-ray"/>
    <property type="resolution" value="2.60 A"/>
    <property type="chains" value="A=45-315"/>
</dbReference>
<dbReference type="PDB" id="3HXP">
    <property type="method" value="X-ray"/>
    <property type="resolution" value="3.20 A"/>
    <property type="chains" value="A=25-315"/>
</dbReference>
<dbReference type="PDBsum" id="3G9Q"/>
<dbReference type="PDBsum" id="3HXP"/>
<dbReference type="SMR" id="P37580"/>
<dbReference type="FunCoup" id="P37580">
    <property type="interactions" value="36"/>
</dbReference>
<dbReference type="STRING" id="224308.BSU33320"/>
<dbReference type="PaxDb" id="224308-BSU33320"/>
<dbReference type="EnsemblBacteria" id="CAB15338">
    <property type="protein sequence ID" value="CAB15338"/>
    <property type="gene ID" value="BSU_33320"/>
</dbReference>
<dbReference type="GeneID" id="935996"/>
<dbReference type="KEGG" id="bsu:BSU33320"/>
<dbReference type="PATRIC" id="fig|224308.179.peg.3616"/>
<dbReference type="eggNOG" id="COG0614">
    <property type="taxonomic scope" value="Bacteria"/>
</dbReference>
<dbReference type="InParanoid" id="P37580"/>
<dbReference type="OrthoDB" id="2241086at2"/>
<dbReference type="PhylomeDB" id="P37580"/>
<dbReference type="BioCyc" id="BSUB:BSU33320-MONOMER"/>
<dbReference type="EvolutionaryTrace" id="P37580"/>
<dbReference type="Proteomes" id="UP000001570">
    <property type="component" value="Chromosome"/>
</dbReference>
<dbReference type="GO" id="GO:0045121">
    <property type="term" value="C:membrane raft"/>
    <property type="evidence" value="ECO:0007669"/>
    <property type="project" value="UniProtKB-SubCell"/>
</dbReference>
<dbReference type="GO" id="GO:0030288">
    <property type="term" value="C:outer membrane-bounded periplasmic space"/>
    <property type="evidence" value="ECO:0000318"/>
    <property type="project" value="GO_Central"/>
</dbReference>
<dbReference type="GO" id="GO:0005886">
    <property type="term" value="C:plasma membrane"/>
    <property type="evidence" value="ECO:0007669"/>
    <property type="project" value="UniProtKB-SubCell"/>
</dbReference>
<dbReference type="GO" id="GO:1901678">
    <property type="term" value="P:iron coordination entity transport"/>
    <property type="evidence" value="ECO:0007669"/>
    <property type="project" value="UniProtKB-ARBA"/>
</dbReference>
<dbReference type="CDD" id="cd01138">
    <property type="entry name" value="FeuA"/>
    <property type="match status" value="1"/>
</dbReference>
<dbReference type="FunFam" id="3.40.50.1980:FF:000032">
    <property type="entry name" value="Ferrichrome ABC transporter substrate-bindingprotein"/>
    <property type="match status" value="1"/>
</dbReference>
<dbReference type="Gene3D" id="3.40.50.1980">
    <property type="entry name" value="Nitrogenase molybdenum iron protein domain"/>
    <property type="match status" value="2"/>
</dbReference>
<dbReference type="InterPro" id="IPR002491">
    <property type="entry name" value="ABC_transptr_periplasmic_BD"/>
</dbReference>
<dbReference type="InterPro" id="IPR051313">
    <property type="entry name" value="Bact_iron-sidero_bind"/>
</dbReference>
<dbReference type="PANTHER" id="PTHR30532">
    <property type="entry name" value="IRON III DICITRATE-BINDING PERIPLASMIC PROTEIN"/>
    <property type="match status" value="1"/>
</dbReference>
<dbReference type="PANTHER" id="PTHR30532:SF26">
    <property type="entry name" value="IRON(3+)-HYDROXAMATE-BINDING PROTEIN FHUD"/>
    <property type="match status" value="1"/>
</dbReference>
<dbReference type="Pfam" id="PF01497">
    <property type="entry name" value="Peripla_BP_2"/>
    <property type="match status" value="1"/>
</dbReference>
<dbReference type="SUPFAM" id="SSF53807">
    <property type="entry name" value="Helical backbone' metal receptor"/>
    <property type="match status" value="1"/>
</dbReference>
<dbReference type="PROSITE" id="PS50983">
    <property type="entry name" value="FE_B12_PBP"/>
    <property type="match status" value="1"/>
</dbReference>
<dbReference type="PROSITE" id="PS51257">
    <property type="entry name" value="PROKAR_LIPOPROTEIN"/>
    <property type="match status" value="1"/>
</dbReference>
<feature type="signal peptide" evidence="7">
    <location>
        <begin position="1"/>
        <end position="23"/>
    </location>
</feature>
<feature type="chain" id="PRO_0000031823" description="Iron(3+)-hydroxamate-binding protein FhuD">
    <location>
        <begin position="24"/>
        <end position="315"/>
    </location>
</feature>
<feature type="domain" description="Fe/B12 periplasmic-binding" evidence="2">
    <location>
        <begin position="60"/>
        <end position="315"/>
    </location>
</feature>
<feature type="lipid moiety-binding region" description="N-palmitoyl cysteine" evidence="7">
    <location>
        <position position="24"/>
    </location>
</feature>
<feature type="lipid moiety-binding region" description="S-diacylglycerol cysteine" evidence="7">
    <location>
        <position position="24"/>
    </location>
</feature>
<feature type="strand" evidence="8">
    <location>
        <begin position="61"/>
        <end position="63"/>
    </location>
</feature>
<feature type="helix" evidence="8">
    <location>
        <begin position="66"/>
        <end position="68"/>
    </location>
</feature>
<feature type="helix" evidence="8">
    <location>
        <begin position="69"/>
        <end position="75"/>
    </location>
</feature>
<feature type="strand" evidence="8">
    <location>
        <begin position="79"/>
        <end position="81"/>
    </location>
</feature>
<feature type="helix" evidence="8">
    <location>
        <begin position="84"/>
        <end position="87"/>
    </location>
</feature>
<feature type="turn" evidence="8">
    <location>
        <begin position="90"/>
        <end position="95"/>
    </location>
</feature>
<feature type="helix" evidence="8">
    <location>
        <begin position="108"/>
        <end position="112"/>
    </location>
</feature>
<feature type="strand" evidence="8">
    <location>
        <begin position="117"/>
        <end position="122"/>
    </location>
</feature>
<feature type="strand" evidence="9">
    <location>
        <begin position="125"/>
        <end position="127"/>
    </location>
</feature>
<feature type="helix" evidence="8">
    <location>
        <begin position="129"/>
        <end position="135"/>
    </location>
</feature>
<feature type="strand" evidence="8">
    <location>
        <begin position="138"/>
        <end position="141"/>
    </location>
</feature>
<feature type="turn" evidence="9">
    <location>
        <begin position="143"/>
        <end position="145"/>
    </location>
</feature>
<feature type="helix" evidence="8">
    <location>
        <begin position="150"/>
        <end position="159"/>
    </location>
</feature>
<feature type="helix" evidence="8">
    <location>
        <begin position="162"/>
        <end position="187"/>
    </location>
</feature>
<feature type="strand" evidence="8">
    <location>
        <begin position="191"/>
        <end position="198"/>
    </location>
</feature>
<feature type="strand" evidence="8">
    <location>
        <begin position="201"/>
        <end position="205"/>
    </location>
</feature>
<feature type="strand" evidence="8">
    <location>
        <begin position="207"/>
        <end position="210"/>
    </location>
</feature>
<feature type="helix" evidence="8">
    <location>
        <begin position="213"/>
        <end position="217"/>
    </location>
</feature>
<feature type="turn" evidence="9">
    <location>
        <begin position="218"/>
        <end position="220"/>
    </location>
</feature>
<feature type="helix" evidence="8">
    <location>
        <begin position="226"/>
        <end position="232"/>
    </location>
</feature>
<feature type="turn" evidence="8">
    <location>
        <begin position="233"/>
        <end position="235"/>
    </location>
</feature>
<feature type="strand" evidence="8">
    <location>
        <begin position="236"/>
        <end position="242"/>
    </location>
</feature>
<feature type="strand" evidence="9">
    <location>
        <begin position="244"/>
        <end position="246"/>
    </location>
</feature>
<feature type="helix" evidence="8">
    <location>
        <begin position="247"/>
        <end position="250"/>
    </location>
</feature>
<feature type="strand" evidence="8">
    <location>
        <begin position="253"/>
        <end position="260"/>
    </location>
</feature>
<feature type="turn" evidence="8">
    <location>
        <begin position="269"/>
        <end position="271"/>
    </location>
</feature>
<feature type="helix" evidence="8">
    <location>
        <begin position="273"/>
        <end position="276"/>
    </location>
</feature>
<feature type="helix" evidence="8">
    <location>
        <begin position="279"/>
        <end position="282"/>
    </location>
</feature>
<feature type="strand" evidence="8">
    <location>
        <begin position="286"/>
        <end position="288"/>
    </location>
</feature>
<feature type="helix" evidence="8">
    <location>
        <begin position="293"/>
        <end position="295"/>
    </location>
</feature>
<feature type="helix" evidence="8">
    <location>
        <begin position="299"/>
        <end position="314"/>
    </location>
</feature>
<proteinExistence type="evidence at protein level"/>
<protein>
    <recommendedName>
        <fullName>Iron(3+)-hydroxamate-binding protein FhuD</fullName>
    </recommendedName>
    <alternativeName>
        <fullName>Ferric hydroxamate uptake protein D</fullName>
    </alternativeName>
    <alternativeName>
        <fullName>Ferrichrome-binding protein</fullName>
    </alternativeName>
    <alternativeName>
        <fullName>Iron(III)-hydroxamate-binding protein FhuD</fullName>
    </alternativeName>
</protein>
<gene>
    <name type="primary">fhuD</name>
    <name type="ordered locus">BSU33320</name>
</gene>